<proteinExistence type="inferred from homology"/>
<dbReference type="EC" id="1.4.3.5" evidence="1"/>
<dbReference type="EMBL" id="CP000653">
    <property type="protein sequence ID" value="ABP60489.1"/>
    <property type="molecule type" value="Genomic_DNA"/>
</dbReference>
<dbReference type="RefSeq" id="WP_012017204.1">
    <property type="nucleotide sequence ID" value="NC_009436.1"/>
</dbReference>
<dbReference type="SMR" id="A4W9V9"/>
<dbReference type="STRING" id="399742.Ent638_1810"/>
<dbReference type="KEGG" id="ent:Ent638_1810"/>
<dbReference type="eggNOG" id="COG0259">
    <property type="taxonomic scope" value="Bacteria"/>
</dbReference>
<dbReference type="HOGENOM" id="CLU_032263_2_2_6"/>
<dbReference type="OrthoDB" id="9780392at2"/>
<dbReference type="UniPathway" id="UPA01068">
    <property type="reaction ID" value="UER00304"/>
</dbReference>
<dbReference type="UniPathway" id="UPA01068">
    <property type="reaction ID" value="UER00305"/>
</dbReference>
<dbReference type="Proteomes" id="UP000000230">
    <property type="component" value="Chromosome"/>
</dbReference>
<dbReference type="GO" id="GO:0010181">
    <property type="term" value="F:FMN binding"/>
    <property type="evidence" value="ECO:0007669"/>
    <property type="project" value="UniProtKB-UniRule"/>
</dbReference>
<dbReference type="GO" id="GO:0004733">
    <property type="term" value="F:pyridoxamine phosphate oxidase activity"/>
    <property type="evidence" value="ECO:0007669"/>
    <property type="project" value="UniProtKB-UniRule"/>
</dbReference>
<dbReference type="GO" id="GO:0008615">
    <property type="term" value="P:pyridoxine biosynthetic process"/>
    <property type="evidence" value="ECO:0007669"/>
    <property type="project" value="UniProtKB-KW"/>
</dbReference>
<dbReference type="FunFam" id="2.30.110.10:FF:000001">
    <property type="entry name" value="Pyridoxine/pyridoxamine 5'-phosphate oxidase"/>
    <property type="match status" value="1"/>
</dbReference>
<dbReference type="Gene3D" id="2.30.110.10">
    <property type="entry name" value="Electron Transport, Fmn-binding Protein, Chain A"/>
    <property type="match status" value="1"/>
</dbReference>
<dbReference type="HAMAP" id="MF_01629">
    <property type="entry name" value="PdxH"/>
    <property type="match status" value="1"/>
</dbReference>
<dbReference type="InterPro" id="IPR000659">
    <property type="entry name" value="Pyridox_Oxase"/>
</dbReference>
<dbReference type="InterPro" id="IPR019740">
    <property type="entry name" value="Pyridox_Oxase_CS"/>
</dbReference>
<dbReference type="InterPro" id="IPR011576">
    <property type="entry name" value="Pyridox_Oxase_N"/>
</dbReference>
<dbReference type="InterPro" id="IPR019576">
    <property type="entry name" value="Pyridoxamine_oxidase_dimer_C"/>
</dbReference>
<dbReference type="InterPro" id="IPR012349">
    <property type="entry name" value="Split_barrel_FMN-bd"/>
</dbReference>
<dbReference type="NCBIfam" id="TIGR00558">
    <property type="entry name" value="pdxH"/>
    <property type="match status" value="1"/>
</dbReference>
<dbReference type="NCBIfam" id="NF004231">
    <property type="entry name" value="PRK05679.1"/>
    <property type="match status" value="1"/>
</dbReference>
<dbReference type="PANTHER" id="PTHR10851:SF0">
    <property type="entry name" value="PYRIDOXINE-5'-PHOSPHATE OXIDASE"/>
    <property type="match status" value="1"/>
</dbReference>
<dbReference type="PANTHER" id="PTHR10851">
    <property type="entry name" value="PYRIDOXINE-5-PHOSPHATE OXIDASE"/>
    <property type="match status" value="1"/>
</dbReference>
<dbReference type="Pfam" id="PF10590">
    <property type="entry name" value="PNP_phzG_C"/>
    <property type="match status" value="1"/>
</dbReference>
<dbReference type="Pfam" id="PF01243">
    <property type="entry name" value="PNPOx_N"/>
    <property type="match status" value="1"/>
</dbReference>
<dbReference type="PIRSF" id="PIRSF000190">
    <property type="entry name" value="Pyd_amn-ph_oxd"/>
    <property type="match status" value="1"/>
</dbReference>
<dbReference type="SUPFAM" id="SSF50475">
    <property type="entry name" value="FMN-binding split barrel"/>
    <property type="match status" value="1"/>
</dbReference>
<dbReference type="PROSITE" id="PS01064">
    <property type="entry name" value="PYRIDOX_OXIDASE"/>
    <property type="match status" value="1"/>
</dbReference>
<name>PDXH_ENT38</name>
<evidence type="ECO:0000255" key="1">
    <source>
        <dbReference type="HAMAP-Rule" id="MF_01629"/>
    </source>
</evidence>
<protein>
    <recommendedName>
        <fullName evidence="1">Pyridoxine/pyridoxamine 5'-phosphate oxidase</fullName>
        <ecNumber evidence="1">1.4.3.5</ecNumber>
    </recommendedName>
    <alternativeName>
        <fullName evidence="1">PNP/PMP oxidase</fullName>
        <shortName evidence="1">PNPOx</shortName>
    </alternativeName>
    <alternativeName>
        <fullName evidence="1">Pyridoxal 5'-phosphate synthase</fullName>
    </alternativeName>
</protein>
<gene>
    <name evidence="1" type="primary">pdxH</name>
    <name type="ordered locus">Ent638_1810</name>
</gene>
<organism>
    <name type="scientific">Enterobacter sp. (strain 638)</name>
    <dbReference type="NCBI Taxonomy" id="399742"/>
    <lineage>
        <taxon>Bacteria</taxon>
        <taxon>Pseudomonadati</taxon>
        <taxon>Pseudomonadota</taxon>
        <taxon>Gammaproteobacteria</taxon>
        <taxon>Enterobacterales</taxon>
        <taxon>Enterobacteriaceae</taxon>
        <taxon>Enterobacter</taxon>
    </lineage>
</organism>
<accession>A4W9V9</accession>
<comment type="function">
    <text evidence="1">Catalyzes the oxidation of either pyridoxine 5'-phosphate (PNP) or pyridoxamine 5'-phosphate (PMP) into pyridoxal 5'-phosphate (PLP).</text>
</comment>
<comment type="catalytic activity">
    <reaction evidence="1">
        <text>pyridoxamine 5'-phosphate + O2 + H2O = pyridoxal 5'-phosphate + H2O2 + NH4(+)</text>
        <dbReference type="Rhea" id="RHEA:15817"/>
        <dbReference type="ChEBI" id="CHEBI:15377"/>
        <dbReference type="ChEBI" id="CHEBI:15379"/>
        <dbReference type="ChEBI" id="CHEBI:16240"/>
        <dbReference type="ChEBI" id="CHEBI:28938"/>
        <dbReference type="ChEBI" id="CHEBI:58451"/>
        <dbReference type="ChEBI" id="CHEBI:597326"/>
        <dbReference type="EC" id="1.4.3.5"/>
    </reaction>
</comment>
<comment type="catalytic activity">
    <reaction evidence="1">
        <text>pyridoxine 5'-phosphate + O2 = pyridoxal 5'-phosphate + H2O2</text>
        <dbReference type="Rhea" id="RHEA:15149"/>
        <dbReference type="ChEBI" id="CHEBI:15379"/>
        <dbReference type="ChEBI" id="CHEBI:16240"/>
        <dbReference type="ChEBI" id="CHEBI:58589"/>
        <dbReference type="ChEBI" id="CHEBI:597326"/>
        <dbReference type="EC" id="1.4.3.5"/>
    </reaction>
</comment>
<comment type="cofactor">
    <cofactor evidence="1">
        <name>FMN</name>
        <dbReference type="ChEBI" id="CHEBI:58210"/>
    </cofactor>
    <text evidence="1">Binds 1 FMN per subunit.</text>
</comment>
<comment type="pathway">
    <text evidence="1">Cofactor metabolism; pyridoxal 5'-phosphate salvage; pyridoxal 5'-phosphate from pyridoxamine 5'-phosphate: step 1/1.</text>
</comment>
<comment type="pathway">
    <text evidence="1">Cofactor metabolism; pyridoxal 5'-phosphate salvage; pyridoxal 5'-phosphate from pyridoxine 5'-phosphate: step 1/1.</text>
</comment>
<comment type="subunit">
    <text evidence="1">Homodimer.</text>
</comment>
<comment type="similarity">
    <text evidence="1">Belongs to the pyridoxamine 5'-phosphate oxidase family.</text>
</comment>
<keyword id="KW-0285">Flavoprotein</keyword>
<keyword id="KW-0288">FMN</keyword>
<keyword id="KW-0560">Oxidoreductase</keyword>
<keyword id="KW-0664">Pyridoxine biosynthesis</keyword>
<sequence length="218" mass="25530">MSDNDELQQIAHLRREYTKGGLRRQDLPAEPLDLFERWLKQACEAKLADPTAMVVATVDENSQPYQRIVLLKHYDEKGLVFYTNLGSRKAHHLENNPRISLLFPWHMLERQVMVTGKAERLSTLEVLKYFHSRPRDSQIGAWVSKQSSRISARGVLESKFLELKQKFQQGEVPLPSFWGGFRVSVEQMEFWQGGEHRLHDRFLYQRDNAAWKIDRLAP</sequence>
<reference key="1">
    <citation type="journal article" date="2010" name="PLoS Genet.">
        <title>Genome sequence of the plant growth promoting endophytic bacterium Enterobacter sp. 638.</title>
        <authorList>
            <person name="Taghavi S."/>
            <person name="van der Lelie D."/>
            <person name="Hoffman A."/>
            <person name="Zhang Y.B."/>
            <person name="Walla M.D."/>
            <person name="Vangronsveld J."/>
            <person name="Newman L."/>
            <person name="Monchy S."/>
        </authorList>
    </citation>
    <scope>NUCLEOTIDE SEQUENCE [LARGE SCALE GENOMIC DNA]</scope>
    <source>
        <strain>638</strain>
    </source>
</reference>
<feature type="chain" id="PRO_1000069693" description="Pyridoxine/pyridoxamine 5'-phosphate oxidase">
    <location>
        <begin position="1"/>
        <end position="218"/>
    </location>
</feature>
<feature type="binding site" evidence="1">
    <location>
        <begin position="14"/>
        <end position="17"/>
    </location>
    <ligand>
        <name>substrate</name>
    </ligand>
</feature>
<feature type="binding site" evidence="1">
    <location>
        <begin position="67"/>
        <end position="72"/>
    </location>
    <ligand>
        <name>FMN</name>
        <dbReference type="ChEBI" id="CHEBI:58210"/>
    </ligand>
</feature>
<feature type="binding site" evidence="1">
    <location>
        <position position="72"/>
    </location>
    <ligand>
        <name>substrate</name>
    </ligand>
</feature>
<feature type="binding site" evidence="1">
    <location>
        <begin position="82"/>
        <end position="83"/>
    </location>
    <ligand>
        <name>FMN</name>
        <dbReference type="ChEBI" id="CHEBI:58210"/>
    </ligand>
</feature>
<feature type="binding site" evidence="1">
    <location>
        <position position="88"/>
    </location>
    <ligand>
        <name>FMN</name>
        <dbReference type="ChEBI" id="CHEBI:58210"/>
    </ligand>
</feature>
<feature type="binding site" evidence="1">
    <location>
        <position position="89"/>
    </location>
    <ligand>
        <name>FMN</name>
        <dbReference type="ChEBI" id="CHEBI:58210"/>
    </ligand>
</feature>
<feature type="binding site" evidence="1">
    <location>
        <position position="111"/>
    </location>
    <ligand>
        <name>FMN</name>
        <dbReference type="ChEBI" id="CHEBI:58210"/>
    </ligand>
</feature>
<feature type="binding site" evidence="1">
    <location>
        <position position="129"/>
    </location>
    <ligand>
        <name>substrate</name>
    </ligand>
</feature>
<feature type="binding site" evidence="1">
    <location>
        <position position="133"/>
    </location>
    <ligand>
        <name>substrate</name>
    </ligand>
</feature>
<feature type="binding site" evidence="1">
    <location>
        <position position="137"/>
    </location>
    <ligand>
        <name>substrate</name>
    </ligand>
</feature>
<feature type="binding site" evidence="1">
    <location>
        <begin position="146"/>
        <end position="147"/>
    </location>
    <ligand>
        <name>FMN</name>
        <dbReference type="ChEBI" id="CHEBI:58210"/>
    </ligand>
</feature>
<feature type="binding site" evidence="1">
    <location>
        <position position="191"/>
    </location>
    <ligand>
        <name>FMN</name>
        <dbReference type="ChEBI" id="CHEBI:58210"/>
    </ligand>
</feature>
<feature type="binding site" evidence="1">
    <location>
        <begin position="197"/>
        <end position="199"/>
    </location>
    <ligand>
        <name>substrate</name>
    </ligand>
</feature>
<feature type="binding site" evidence="1">
    <location>
        <position position="201"/>
    </location>
    <ligand>
        <name>FMN</name>
        <dbReference type="ChEBI" id="CHEBI:58210"/>
    </ligand>
</feature>